<gene>
    <name type="primary">Batf3</name>
    <name type="synonym">Jdp1</name>
</gene>
<sequence length="133" mass="15129">MSQGPPAGGVLQSSVAAPGNQPQSPKDDDRKVRRREKNRVAAQRSRKKQTQKSDKLHEEHESLEQENSVLRREIAKLKEELRHLTEALKEHEKMCPLLLCPMNFVQLRPDPVASWSAHDAPDHPSFIWLGTLV</sequence>
<protein>
    <recommendedName>
        <fullName>Basic leucine zipper transcriptional factor ATF-like 3</fullName>
        <shortName>B-ATF-3</shortName>
    </recommendedName>
    <alternativeName>
        <fullName>Jun dimerization protein 1</fullName>
        <shortName>JDP-1</shortName>
    </alternativeName>
</protein>
<proteinExistence type="evidence at protein level"/>
<comment type="function">
    <text evidence="1">AP-1 family transcription factor that controls the differentiation of CD8(+) thymic conventional dendritic cells in the immune system. Acts via the formation of a heterodimer with JUN family proteins that recognizes and binds DNA sequence 5'-TGA[CG]TCA-3' and regulates expression of target genes. Required for development of CD8-alpha(+) classical dendritic cells (cDCs) and related CD103(+) dendritic cells that cross-present antigens to CD8 T-cells and produce interleukin-12 (IL12) in response to pathogens (By similarity).</text>
</comment>
<comment type="subunit">
    <text evidence="5">Heterodimer; heterodimerizes with JUN family proteins. Interacts with JUN.</text>
</comment>
<comment type="subcellular location">
    <subcellularLocation>
        <location evidence="3">Nucleus</location>
    </subcellularLocation>
</comment>
<comment type="tissue specificity">
    <text evidence="5">Ubiquitously expressed.</text>
</comment>
<comment type="similarity">
    <text evidence="6">Belongs to the bZIP family.</text>
</comment>
<name>BATF3_RAT</name>
<reference key="1">
    <citation type="journal article" date="1997" name="Mol. Cell. Biol.">
        <title>Isolation of an AP-1 repressor by a novel method for detecting protein-protein interactions.</title>
        <authorList>
            <person name="Aronheim A."/>
            <person name="Zandi E."/>
            <person name="Hennemann H."/>
            <person name="Elledge S.J."/>
            <person name="Karin M."/>
        </authorList>
    </citation>
    <scope>NUCLEOTIDE SEQUENCE [GENOMIC DNA]</scope>
    <scope>TISSUE SPECIFICITY</scope>
    <scope>INTERACTION WITH JUN</scope>
</reference>
<feature type="chain" id="PRO_0000326108" description="Basic leucine zipper transcriptional factor ATF-like 3">
    <location>
        <begin position="1"/>
        <end position="133"/>
    </location>
</feature>
<feature type="domain" description="bZIP" evidence="3">
    <location>
        <begin position="28"/>
        <end position="91"/>
    </location>
</feature>
<feature type="region of interest" description="Disordered" evidence="4">
    <location>
        <begin position="1"/>
        <end position="68"/>
    </location>
</feature>
<feature type="region of interest" description="Basic motif" evidence="3">
    <location>
        <begin position="30"/>
        <end position="55"/>
    </location>
</feature>
<feature type="region of interest" description="Leucine-zipper" evidence="3">
    <location>
        <begin position="56"/>
        <end position="84"/>
    </location>
</feature>
<feature type="compositionally biased region" description="Polar residues" evidence="4">
    <location>
        <begin position="11"/>
        <end position="24"/>
    </location>
</feature>
<feature type="compositionally biased region" description="Basic and acidic residues" evidence="4">
    <location>
        <begin position="51"/>
        <end position="68"/>
    </location>
</feature>
<feature type="modified residue" description="Phosphoserine" evidence="2">
    <location>
        <position position="2"/>
    </location>
</feature>
<feature type="modified residue" description="Phosphoserine" evidence="2">
    <location>
        <position position="24"/>
    </location>
</feature>
<organism>
    <name type="scientific">Rattus norvegicus</name>
    <name type="common">Rat</name>
    <dbReference type="NCBI Taxonomy" id="10116"/>
    <lineage>
        <taxon>Eukaryota</taxon>
        <taxon>Metazoa</taxon>
        <taxon>Chordata</taxon>
        <taxon>Craniata</taxon>
        <taxon>Vertebrata</taxon>
        <taxon>Euteleostomi</taxon>
        <taxon>Mammalia</taxon>
        <taxon>Eutheria</taxon>
        <taxon>Euarchontoglires</taxon>
        <taxon>Glires</taxon>
        <taxon>Rodentia</taxon>
        <taxon>Myomorpha</taxon>
        <taxon>Muroidea</taxon>
        <taxon>Muridae</taxon>
        <taxon>Murinae</taxon>
        <taxon>Rattus</taxon>
    </lineage>
</organism>
<evidence type="ECO:0000250" key="1"/>
<evidence type="ECO:0000250" key="2">
    <source>
        <dbReference type="UniProtKB" id="Q9NR55"/>
    </source>
</evidence>
<evidence type="ECO:0000255" key="3">
    <source>
        <dbReference type="PROSITE-ProRule" id="PRU00978"/>
    </source>
</evidence>
<evidence type="ECO:0000256" key="4">
    <source>
        <dbReference type="SAM" id="MobiDB-lite"/>
    </source>
</evidence>
<evidence type="ECO:0000269" key="5">
    <source>
    </source>
</evidence>
<evidence type="ECO:0000305" key="6"/>
<dbReference type="EMBL" id="U53450">
    <property type="protein sequence ID" value="AAB49921.1"/>
    <property type="molecule type" value="Genomic_DNA"/>
</dbReference>
<dbReference type="RefSeq" id="NP_068637.1">
    <property type="nucleotide sequence ID" value="NM_021865.1"/>
</dbReference>
<dbReference type="SMR" id="P97876"/>
<dbReference type="BioGRID" id="248847">
    <property type="interactions" value="1"/>
</dbReference>
<dbReference type="FunCoup" id="P97876">
    <property type="interactions" value="44"/>
</dbReference>
<dbReference type="STRING" id="10116.ENSRNOP00000004962"/>
<dbReference type="PhosphoSitePlus" id="P97876"/>
<dbReference type="PaxDb" id="10116-ENSRNOP00000004962"/>
<dbReference type="GeneID" id="60462"/>
<dbReference type="KEGG" id="rno:60462"/>
<dbReference type="AGR" id="RGD:620501"/>
<dbReference type="CTD" id="55509"/>
<dbReference type="RGD" id="620501">
    <property type="gene designation" value="Batf3"/>
</dbReference>
<dbReference type="eggNOG" id="KOG1414">
    <property type="taxonomic scope" value="Eukaryota"/>
</dbReference>
<dbReference type="InParanoid" id="P97876"/>
<dbReference type="PhylomeDB" id="P97876"/>
<dbReference type="PRO" id="PR:P97876"/>
<dbReference type="Proteomes" id="UP000002494">
    <property type="component" value="Unplaced"/>
</dbReference>
<dbReference type="GO" id="GO:0005634">
    <property type="term" value="C:nucleus"/>
    <property type="evidence" value="ECO:0000318"/>
    <property type="project" value="GO_Central"/>
</dbReference>
<dbReference type="GO" id="GO:0090575">
    <property type="term" value="C:RNA polymerase II transcription regulator complex"/>
    <property type="evidence" value="ECO:0000266"/>
    <property type="project" value="RGD"/>
</dbReference>
<dbReference type="GO" id="GO:0003677">
    <property type="term" value="F:DNA binding"/>
    <property type="evidence" value="ECO:0000304"/>
    <property type="project" value="RGD"/>
</dbReference>
<dbReference type="GO" id="GO:0000981">
    <property type="term" value="F:DNA-binding transcription factor activity, RNA polymerase II-specific"/>
    <property type="evidence" value="ECO:0000318"/>
    <property type="project" value="GO_Central"/>
</dbReference>
<dbReference type="GO" id="GO:0001227">
    <property type="term" value="F:DNA-binding transcription repressor activity, RNA polymerase II-specific"/>
    <property type="evidence" value="ECO:0000266"/>
    <property type="project" value="RGD"/>
</dbReference>
<dbReference type="GO" id="GO:0044877">
    <property type="term" value="F:protein-containing complex binding"/>
    <property type="evidence" value="ECO:0000304"/>
    <property type="project" value="RGD"/>
</dbReference>
<dbReference type="GO" id="GO:0000978">
    <property type="term" value="F:RNA polymerase II cis-regulatory region sequence-specific DNA binding"/>
    <property type="evidence" value="ECO:0000266"/>
    <property type="project" value="RGD"/>
</dbReference>
<dbReference type="GO" id="GO:1990837">
    <property type="term" value="F:sequence-specific double-stranded DNA binding"/>
    <property type="evidence" value="ECO:0000266"/>
    <property type="project" value="RGD"/>
</dbReference>
<dbReference type="GO" id="GO:0097028">
    <property type="term" value="P:dendritic cell differentiation"/>
    <property type="evidence" value="ECO:0000250"/>
    <property type="project" value="UniProtKB"/>
</dbReference>
<dbReference type="GO" id="GO:0043011">
    <property type="term" value="P:myeloid dendritic cell differentiation"/>
    <property type="evidence" value="ECO:0000250"/>
    <property type="project" value="UniProtKB"/>
</dbReference>
<dbReference type="GO" id="GO:0000122">
    <property type="term" value="P:negative regulation of transcription by RNA polymerase II"/>
    <property type="evidence" value="ECO:0000266"/>
    <property type="project" value="RGD"/>
</dbReference>
<dbReference type="GO" id="GO:0006357">
    <property type="term" value="P:regulation of transcription by RNA polymerase II"/>
    <property type="evidence" value="ECO:0000318"/>
    <property type="project" value="GO_Central"/>
</dbReference>
<dbReference type="GO" id="GO:0009615">
    <property type="term" value="P:response to virus"/>
    <property type="evidence" value="ECO:0000250"/>
    <property type="project" value="UniProtKB"/>
</dbReference>
<dbReference type="CDD" id="cd14701">
    <property type="entry name" value="bZIP_BATF"/>
    <property type="match status" value="1"/>
</dbReference>
<dbReference type="FunFam" id="1.20.5.170:FF:000043">
    <property type="entry name" value="Basic leucine zipper transcriptional factor ATF-like"/>
    <property type="match status" value="1"/>
</dbReference>
<dbReference type="Gene3D" id="1.20.5.170">
    <property type="match status" value="1"/>
</dbReference>
<dbReference type="InterPro" id="IPR000837">
    <property type="entry name" value="AP-1"/>
</dbReference>
<dbReference type="InterPro" id="IPR004827">
    <property type="entry name" value="bZIP"/>
</dbReference>
<dbReference type="InterPro" id="IPR046347">
    <property type="entry name" value="bZIP_sf"/>
</dbReference>
<dbReference type="PANTHER" id="PTHR23351:SF13">
    <property type="entry name" value="BASIC LEUCINE ZIPPER TRANSCRIPTIONAL FACTOR ATF-LIKE 3"/>
    <property type="match status" value="1"/>
</dbReference>
<dbReference type="PANTHER" id="PTHR23351">
    <property type="entry name" value="FOS TRANSCRIPTION FACTOR-RELATED"/>
    <property type="match status" value="1"/>
</dbReference>
<dbReference type="Pfam" id="PF07716">
    <property type="entry name" value="bZIP_2"/>
    <property type="match status" value="1"/>
</dbReference>
<dbReference type="PRINTS" id="PR00042">
    <property type="entry name" value="LEUZIPPRFOS"/>
</dbReference>
<dbReference type="SMART" id="SM00338">
    <property type="entry name" value="BRLZ"/>
    <property type="match status" value="1"/>
</dbReference>
<dbReference type="SUPFAM" id="SSF57959">
    <property type="entry name" value="Leucine zipper domain"/>
    <property type="match status" value="1"/>
</dbReference>
<dbReference type="PROSITE" id="PS50217">
    <property type="entry name" value="BZIP"/>
    <property type="match status" value="1"/>
</dbReference>
<dbReference type="PROSITE" id="PS00036">
    <property type="entry name" value="BZIP_BASIC"/>
    <property type="match status" value="1"/>
</dbReference>
<accession>P97876</accession>
<keyword id="KW-0010">Activator</keyword>
<keyword id="KW-0238">DNA-binding</keyword>
<keyword id="KW-0539">Nucleus</keyword>
<keyword id="KW-0597">Phosphoprotein</keyword>
<keyword id="KW-1185">Reference proteome</keyword>
<keyword id="KW-0678">Repressor</keyword>
<keyword id="KW-0804">Transcription</keyword>
<keyword id="KW-0805">Transcription regulation</keyword>